<keyword id="KW-0012">Acyltransferase</keyword>
<keyword id="KW-1185">Reference proteome</keyword>
<keyword id="KW-0808">Transferase</keyword>
<accession>B9E6R6</accession>
<comment type="function">
    <text evidence="1">Catalyzes the transfer of endogenously produced octanoic acid from octanoyl-acyl-carrier-protein onto the lipoyl domain of GcvH, an intermediate carrier during protein lipoylation.</text>
</comment>
<comment type="catalytic activity">
    <reaction evidence="1">
        <text>octanoyl-[ACP] + L-lysyl-[protein] = N(6)-octanoyl-L-lysyl-[protein] + holo-[ACP] + H(+)</text>
        <dbReference type="Rhea" id="RHEA:17665"/>
        <dbReference type="Rhea" id="RHEA-COMP:9636"/>
        <dbReference type="Rhea" id="RHEA-COMP:9685"/>
        <dbReference type="Rhea" id="RHEA-COMP:9752"/>
        <dbReference type="Rhea" id="RHEA-COMP:9928"/>
        <dbReference type="ChEBI" id="CHEBI:15378"/>
        <dbReference type="ChEBI" id="CHEBI:29969"/>
        <dbReference type="ChEBI" id="CHEBI:64479"/>
        <dbReference type="ChEBI" id="CHEBI:78463"/>
        <dbReference type="ChEBI" id="CHEBI:78809"/>
        <dbReference type="EC" id="2.3.1.181"/>
    </reaction>
</comment>
<comment type="pathway">
    <text evidence="1">Protein modification; protein lipoylation via endogenous pathway; protein N(6)-(lipoyl)lysine from octanoyl-[acyl-carrier-protein].</text>
</comment>
<comment type="subunit">
    <text evidence="1">Monomer.</text>
</comment>
<comment type="miscellaneous">
    <text evidence="1">In the reaction, the free carboxyl group of octanoic acid is attached via an amide linkage to the epsilon-amino group of a specific lysine residue of lipoyl domains of lipoate-dependent enzymes. The reaction proceeds via an octanoyl-thioester enzyme intermediate.</text>
</comment>
<comment type="similarity">
    <text evidence="1">Belongs to the octanoyltransferase LipM family.</text>
</comment>
<feature type="chain" id="PRO_0000410860" description="Octanoyltransferase LipM">
    <location>
        <begin position="1"/>
        <end position="276"/>
    </location>
</feature>
<feature type="domain" description="BPL/LPL catalytic" evidence="2">
    <location>
        <begin position="32"/>
        <end position="247"/>
    </location>
</feature>
<feature type="active site" description="Acyl-thioester intermediate" evidence="1">
    <location>
        <position position="149"/>
    </location>
</feature>
<feature type="site" description="Lowers pKa of active site Cys" evidence="1">
    <location>
        <position position="164"/>
    </location>
</feature>
<evidence type="ECO:0000255" key="1">
    <source>
        <dbReference type="HAMAP-Rule" id="MF_02118"/>
    </source>
</evidence>
<evidence type="ECO:0000255" key="2">
    <source>
        <dbReference type="PROSITE-ProRule" id="PRU01067"/>
    </source>
</evidence>
<dbReference type="EC" id="2.3.1.181" evidence="1"/>
<dbReference type="EMBL" id="AP009484">
    <property type="protein sequence ID" value="BAH17884.1"/>
    <property type="molecule type" value="Genomic_DNA"/>
</dbReference>
<dbReference type="RefSeq" id="WP_012657082.1">
    <property type="nucleotide sequence ID" value="NC_011999.1"/>
</dbReference>
<dbReference type="SMR" id="B9E6R6"/>
<dbReference type="STRING" id="458233.MCCL_1177"/>
<dbReference type="KEGG" id="mcl:MCCL_1177"/>
<dbReference type="eggNOG" id="COG0095">
    <property type="taxonomic scope" value="Bacteria"/>
</dbReference>
<dbReference type="HOGENOM" id="CLU_022986_5_0_9"/>
<dbReference type="OrthoDB" id="9774653at2"/>
<dbReference type="Proteomes" id="UP000001383">
    <property type="component" value="Chromosome"/>
</dbReference>
<dbReference type="GO" id="GO:0033819">
    <property type="term" value="F:lipoyl(octanoyl) transferase activity"/>
    <property type="evidence" value="ECO:0007669"/>
    <property type="project" value="UniProtKB-UniRule"/>
</dbReference>
<dbReference type="GO" id="GO:0009107">
    <property type="term" value="P:lipoate biosynthetic process"/>
    <property type="evidence" value="ECO:0007669"/>
    <property type="project" value="UniProtKB-UniRule"/>
</dbReference>
<dbReference type="GO" id="GO:0036211">
    <property type="term" value="P:protein modification process"/>
    <property type="evidence" value="ECO:0007669"/>
    <property type="project" value="InterPro"/>
</dbReference>
<dbReference type="CDD" id="cd16443">
    <property type="entry name" value="LplA"/>
    <property type="match status" value="1"/>
</dbReference>
<dbReference type="Gene3D" id="3.30.930.10">
    <property type="entry name" value="Bira Bifunctional Protein, Domain 2"/>
    <property type="match status" value="1"/>
</dbReference>
<dbReference type="HAMAP" id="MF_02118">
    <property type="entry name" value="LipM"/>
    <property type="match status" value="1"/>
</dbReference>
<dbReference type="InterPro" id="IPR045864">
    <property type="entry name" value="aa-tRNA-synth_II/BPL/LPL"/>
</dbReference>
<dbReference type="InterPro" id="IPR004143">
    <property type="entry name" value="BPL_LPL_catalytic"/>
</dbReference>
<dbReference type="InterPro" id="IPR024898">
    <property type="entry name" value="LipM"/>
</dbReference>
<dbReference type="InterPro" id="IPR050664">
    <property type="entry name" value="Octanoyltrans_LipM/LipL"/>
</dbReference>
<dbReference type="PANTHER" id="PTHR43679:SF2">
    <property type="entry name" value="OCTANOYL-[GCVH]:PROTEIN N-OCTANOYLTRANSFERASE"/>
    <property type="match status" value="1"/>
</dbReference>
<dbReference type="PANTHER" id="PTHR43679">
    <property type="entry name" value="OCTANOYLTRANSFERASE LIPM-RELATED"/>
    <property type="match status" value="1"/>
</dbReference>
<dbReference type="Pfam" id="PF21948">
    <property type="entry name" value="LplA-B_cat"/>
    <property type="match status" value="1"/>
</dbReference>
<dbReference type="SUPFAM" id="SSF55681">
    <property type="entry name" value="Class II aaRS and biotin synthetases"/>
    <property type="match status" value="1"/>
</dbReference>
<dbReference type="PROSITE" id="PS51733">
    <property type="entry name" value="BPL_LPL_CATALYTIC"/>
    <property type="match status" value="1"/>
</dbReference>
<organism>
    <name type="scientific">Macrococcus caseolyticus (strain JCSC5402)</name>
    <name type="common">Macrococcoides caseolyticum</name>
    <dbReference type="NCBI Taxonomy" id="458233"/>
    <lineage>
        <taxon>Bacteria</taxon>
        <taxon>Bacillati</taxon>
        <taxon>Bacillota</taxon>
        <taxon>Bacilli</taxon>
        <taxon>Bacillales</taxon>
        <taxon>Staphylococcaceae</taxon>
        <taxon>Macrococcoides</taxon>
    </lineage>
</organism>
<reference key="1">
    <citation type="journal article" date="2009" name="J. Bacteriol.">
        <title>Complete genome sequence of Macrococcus caseolyticus strain JCSCS5402, reflecting the ancestral genome of the human-pathogenic staphylococci.</title>
        <authorList>
            <person name="Baba T."/>
            <person name="Kuwahara-Arai K."/>
            <person name="Uchiyama I."/>
            <person name="Takeuchi F."/>
            <person name="Ito T."/>
            <person name="Hiramatsu K."/>
        </authorList>
    </citation>
    <scope>NUCLEOTIDE SEQUENCE [LARGE SCALE GENOMIC DNA]</scope>
    <source>
        <strain>JCSC5402</strain>
    </source>
</reference>
<gene>
    <name evidence="1" type="primary">lipM</name>
    <name type="ordered locus">MCCL_1177</name>
</gene>
<protein>
    <recommendedName>
        <fullName evidence="1">Octanoyltransferase LipM</fullName>
        <ecNumber evidence="1">2.3.1.181</ecNumber>
    </recommendedName>
    <alternativeName>
        <fullName evidence="1">Octanoyl-[acyl-carrier-protein]:[GcvH] N-octanoyltransferase</fullName>
    </alternativeName>
</protein>
<name>LIPM_MACCJ</name>
<proteinExistence type="inferred from homology"/>
<sequence>MQEEWLFINTHKNNPYYNMAMDEALLNLVSQGALPPVIRFYGWAPKTLSIGYFQKLEKEIDLDKVNAGGYGLVRRATGGRGVLHDKELTYSVIVPESHPMMPESVTAAYKVISTGLLEGFKNLGFQAEFSVPRTKEDRERLKDPRSSVCFDASSWYELVVEGKKIAGSAQTRQKGVILQHGSILQSIDVDELFDLFIFSSERLKERMKRSFYSKAVSIADLTDEEITIAMMEEAFYEGFEKGLDIKLKPFEVTAEIEQEVSVLIEKYRSEEWLKRR</sequence>